<reference key="1">
    <citation type="journal article" date="2005" name="Genome Res.">
        <title>Living with two extremes: conclusions from the genome sequence of Natronomonas pharaonis.</title>
        <authorList>
            <person name="Falb M."/>
            <person name="Pfeiffer F."/>
            <person name="Palm P."/>
            <person name="Rodewald K."/>
            <person name="Hickmann V."/>
            <person name="Tittor J."/>
            <person name="Oesterhelt D."/>
        </authorList>
    </citation>
    <scope>NUCLEOTIDE SEQUENCE [LARGE SCALE GENOMIC DNA]</scope>
    <source>
        <strain>ATCC 35678 / DSM 2160 / CIP 103997 / JCM 8858 / NBRC 14720 / NCIMB 2260 / Gabara</strain>
    </source>
</reference>
<keyword id="KW-0235">DNA replication</keyword>
<keyword id="KW-0238">DNA-binding</keyword>
<keyword id="KW-0239">DNA-directed DNA polymerase</keyword>
<keyword id="KW-0269">Exonuclease</keyword>
<keyword id="KW-0378">Hydrolase</keyword>
<keyword id="KW-0511">Multifunctional enzyme</keyword>
<keyword id="KW-0540">Nuclease</keyword>
<keyword id="KW-0548">Nucleotidyltransferase</keyword>
<keyword id="KW-1185">Reference proteome</keyword>
<keyword id="KW-0808">Transferase</keyword>
<evidence type="ECO:0000250" key="1"/>
<evidence type="ECO:0000255" key="2">
    <source>
        <dbReference type="HAMAP-Rule" id="MF_00324"/>
    </source>
</evidence>
<evidence type="ECO:0000256" key="3">
    <source>
        <dbReference type="SAM" id="MobiDB-lite"/>
    </source>
</evidence>
<proteinExistence type="inferred from homology"/>
<protein>
    <recommendedName>
        <fullName evidence="2">DNA polymerase II large subunit</fullName>
        <shortName evidence="2">Pol II</shortName>
        <ecNumber evidence="2">2.7.7.7</ecNumber>
    </recommendedName>
    <alternativeName>
        <fullName evidence="2">Exodeoxyribonuclease large subunit</fullName>
        <ecNumber evidence="2">3.1.11.1</ecNumber>
    </alternativeName>
</protein>
<dbReference type="EC" id="2.7.7.7" evidence="2"/>
<dbReference type="EC" id="3.1.11.1" evidence="2"/>
<dbReference type="EMBL" id="CR936257">
    <property type="protein sequence ID" value="CAI48329.1"/>
    <property type="molecule type" value="Genomic_DNA"/>
</dbReference>
<dbReference type="RefSeq" id="WP_011321965.1">
    <property type="nucleotide sequence ID" value="NC_007426.1"/>
</dbReference>
<dbReference type="SMR" id="Q3IU54"/>
<dbReference type="STRING" id="348780.NP_0476A"/>
<dbReference type="EnsemblBacteria" id="CAI48329">
    <property type="protein sequence ID" value="CAI48329"/>
    <property type="gene ID" value="NP_0476A"/>
</dbReference>
<dbReference type="GeneID" id="3703041"/>
<dbReference type="KEGG" id="nph:NP_0476A"/>
<dbReference type="eggNOG" id="arCOG04447">
    <property type="taxonomic scope" value="Archaea"/>
</dbReference>
<dbReference type="HOGENOM" id="CLU_001154_0_0_2"/>
<dbReference type="OrthoDB" id="7529at2157"/>
<dbReference type="Proteomes" id="UP000002698">
    <property type="component" value="Chromosome"/>
</dbReference>
<dbReference type="GO" id="GO:0003677">
    <property type="term" value="F:DNA binding"/>
    <property type="evidence" value="ECO:0007669"/>
    <property type="project" value="UniProtKB-UniRule"/>
</dbReference>
<dbReference type="GO" id="GO:0003887">
    <property type="term" value="F:DNA-directed DNA polymerase activity"/>
    <property type="evidence" value="ECO:0007669"/>
    <property type="project" value="UniProtKB-UniRule"/>
</dbReference>
<dbReference type="GO" id="GO:0008310">
    <property type="term" value="F:single-stranded DNA 3'-5' DNA exonuclease activity"/>
    <property type="evidence" value="ECO:0007669"/>
    <property type="project" value="UniProtKB-EC"/>
</dbReference>
<dbReference type="GO" id="GO:0006308">
    <property type="term" value="P:DNA catabolic process"/>
    <property type="evidence" value="ECO:0007669"/>
    <property type="project" value="UniProtKB-UniRule"/>
</dbReference>
<dbReference type="GO" id="GO:0006261">
    <property type="term" value="P:DNA-templated DNA replication"/>
    <property type="evidence" value="ECO:0007669"/>
    <property type="project" value="UniProtKB-UniRule"/>
</dbReference>
<dbReference type="HAMAP" id="MF_00324">
    <property type="entry name" value="DNApol_II_L_arch"/>
    <property type="match status" value="1"/>
</dbReference>
<dbReference type="InterPro" id="IPR004475">
    <property type="entry name" value="PolC_DP2"/>
</dbReference>
<dbReference type="InterPro" id="IPR056172">
    <property type="entry name" value="PolC_DP2_cat_dom"/>
</dbReference>
<dbReference type="InterPro" id="IPR056171">
    <property type="entry name" value="PolC_DP2_central_dom"/>
</dbReference>
<dbReference type="InterPro" id="IPR016033">
    <property type="entry name" value="PolC_DP2_N"/>
</dbReference>
<dbReference type="NCBIfam" id="TIGR00354">
    <property type="entry name" value="polC"/>
    <property type="match status" value="1"/>
</dbReference>
<dbReference type="NCBIfam" id="NF003103">
    <property type="entry name" value="PRK04023.1"/>
    <property type="match status" value="1"/>
</dbReference>
<dbReference type="PANTHER" id="PTHR42210">
    <property type="entry name" value="DNA POLYMERASE II LARGE SUBUNIT"/>
    <property type="match status" value="1"/>
</dbReference>
<dbReference type="PANTHER" id="PTHR42210:SF1">
    <property type="entry name" value="DNA POLYMERASE II LARGE SUBUNIT"/>
    <property type="match status" value="1"/>
</dbReference>
<dbReference type="Pfam" id="PF24846">
    <property type="entry name" value="PolC_DP2_cat"/>
    <property type="match status" value="1"/>
</dbReference>
<dbReference type="Pfam" id="PF24844">
    <property type="entry name" value="PolC_DP2_central"/>
    <property type="match status" value="1"/>
</dbReference>
<dbReference type="Pfam" id="PF03833">
    <property type="entry name" value="PolC_DP2_N"/>
    <property type="match status" value="1"/>
</dbReference>
<dbReference type="PIRSF" id="PIRSF016275">
    <property type="entry name" value="PolC_DP2"/>
    <property type="match status" value="1"/>
</dbReference>
<feature type="chain" id="PRO_0000294698" description="DNA polymerase II large subunit">
    <location>
        <begin position="1"/>
        <end position="1198"/>
    </location>
</feature>
<feature type="region of interest" description="Disordered" evidence="3">
    <location>
        <begin position="281"/>
        <end position="332"/>
    </location>
</feature>
<feature type="region of interest" description="Disordered" evidence="3">
    <location>
        <begin position="534"/>
        <end position="553"/>
    </location>
</feature>
<feature type="compositionally biased region" description="Acidic residues" evidence="3">
    <location>
        <begin position="286"/>
        <end position="319"/>
    </location>
</feature>
<sequence length="1198" mass="132156">MREDDEQYFRRLESDLDTALSVAREARKRGGDPTEDIEIPIAKDMADRVENILGIDGVAERVREMEADPDLSREEAALELAADFANDEVGDYETRAGKVEGAVRTAVALLTEGVVAAPIEGIDRVELLENDDGTEFINIYYAGPIRSAGGTAQALSVLVADYTRTLIGIDEYKARNDETERYAEELSLYDDETGLQYAPKDEETKFIAEHMPIMLDGEATGDEEVSGFRDLERVDTNSARGGMCLVLGEGIAQKAPKIQRYTSQLDEVDWPWLQDLIDGTYKTGEDTDEADADSDDGTDEDAADDSDIDDSSAGDEEADAPSGPPRPDPQKKFLRDLIAGRPVFGHPSEPGGFRLRYGRARNHGFATAGVHPAAMHLIDDFLATGTQIKTERPGKAAGVVPVDTIEGPTVKLANGDVRRVDDPEEALEIRNGVEAILDLGEYLVNYGEFVENNHPLSPAAYAPEWWTQDLAAAGADVQALADSPRVDLEHPSAEQALEWAERYDAPLHPEYTYLWHDLDVERFEALAAAASEGHWAETDGAQQTRPPDGAAESTLVVPRSEPVREALEVLLVEHTQGEETLTVPDAEPLVRSLGLTEGLERTWDELSTAARSYDDGDNAVRAVNEVAPFEVRERAPTRIGCRMGRPEKSEKRDLSPAVHTLFPIGEAGGSQRDIAEAATHAESMQDTPGEVEVQVGRRQCPACDTETFRARCPDCESVTDPRYVCYDCNIDVDPDESGRAICPNCEREADAVQNRTVNVHEEYRSALSNVGERENAFDVLKGVKGLSSEHKVPEPIEKGVLRAKHGVSAFKDGTVRYDMTDLPVTSVRAAELDVTADQLRSLGYETDIHGEPLTHEDQLVELRVQDVVLSNGAAEHMLRTADFVDDLLEQYYGLEPFYDAEDRDDIVGELVFGMAPHTSAAVVGRVIGFTSAAVGYAHPYFHAAKRRNCDGDEDCVMLLLDGLLNFSKTFLPDQRGGRMDAPLVMSSRIDPAEIDDEAHNMDIVSSYPRAFFEATREMADPGEVESLIQLGEDTLGTADEYRGFEHTHDTVDLAAGPDLSAYKTLGDMMEKMDAQLELSRKLRSVDETDVAERVIEYHFLPDIIGNLRAFSRQETRCLDCGEKYRRVPLTGDCRECGGRVNLTVHQGSVNKYIDTAIQVAEEYGCREYTKQRLRILDRAVESIFEDDTNKQSGIADFM</sequence>
<organism>
    <name type="scientific">Natronomonas pharaonis (strain ATCC 35678 / DSM 2160 / CIP 103997 / JCM 8858 / NBRC 14720 / NCIMB 2260 / Gabara)</name>
    <name type="common">Halobacterium pharaonis</name>
    <dbReference type="NCBI Taxonomy" id="348780"/>
    <lineage>
        <taxon>Archaea</taxon>
        <taxon>Methanobacteriati</taxon>
        <taxon>Methanobacteriota</taxon>
        <taxon>Stenosarchaea group</taxon>
        <taxon>Halobacteria</taxon>
        <taxon>Halobacteriales</taxon>
        <taxon>Haloarculaceae</taxon>
        <taxon>Natronomonas</taxon>
    </lineage>
</organism>
<gene>
    <name evidence="2" type="primary">polC</name>
    <name type="synonym">polA2</name>
    <name type="ordered locus">NP_0476A</name>
</gene>
<name>DP2L_NATPD</name>
<accession>Q3IU54</accession>
<comment type="function">
    <text evidence="1">Possesses two activities: a DNA synthesis (polymerase) and an exonucleolytic activity that degrades single-stranded DNA in the 3'- to 5'-direction. Has a template-primer preference which is characteristic of a replicative DNA polymerase (By similarity).</text>
</comment>
<comment type="catalytic activity">
    <reaction evidence="2">
        <text>DNA(n) + a 2'-deoxyribonucleoside 5'-triphosphate = DNA(n+1) + diphosphate</text>
        <dbReference type="Rhea" id="RHEA:22508"/>
        <dbReference type="Rhea" id="RHEA-COMP:17339"/>
        <dbReference type="Rhea" id="RHEA-COMP:17340"/>
        <dbReference type="ChEBI" id="CHEBI:33019"/>
        <dbReference type="ChEBI" id="CHEBI:61560"/>
        <dbReference type="ChEBI" id="CHEBI:173112"/>
        <dbReference type="EC" id="2.7.7.7"/>
    </reaction>
</comment>
<comment type="catalytic activity">
    <reaction evidence="2">
        <text>Exonucleolytic cleavage in the 3'- to 5'-direction to yield nucleoside 5'-phosphates.</text>
        <dbReference type="EC" id="3.1.11.1"/>
    </reaction>
</comment>
<comment type="subunit">
    <text evidence="2">Heterodimer of a large subunit and a small subunit.</text>
</comment>
<comment type="similarity">
    <text evidence="2">Belongs to the archaeal DNA polymerase II family.</text>
</comment>